<name>5DNU_SALA4</name>
<proteinExistence type="inferred from homology"/>
<accession>B5EZL4</accession>
<evidence type="ECO:0000255" key="1">
    <source>
        <dbReference type="HAMAP-Rule" id="MF_01100"/>
    </source>
</evidence>
<evidence type="ECO:0000255" key="2">
    <source>
        <dbReference type="PROSITE-ProRule" id="PRU01175"/>
    </source>
</evidence>
<protein>
    <recommendedName>
        <fullName evidence="1">5'-deoxynucleotidase YfbR</fullName>
        <ecNumber evidence="1">3.1.3.89</ecNumber>
    </recommendedName>
    <alternativeName>
        <fullName evidence="1">5'-deoxyribonucleotidase</fullName>
    </alternativeName>
    <alternativeName>
        <fullName evidence="1">Nucleoside 5'-monophosphate phosphohydrolase</fullName>
    </alternativeName>
</protein>
<organism>
    <name type="scientific">Salmonella agona (strain SL483)</name>
    <dbReference type="NCBI Taxonomy" id="454166"/>
    <lineage>
        <taxon>Bacteria</taxon>
        <taxon>Pseudomonadati</taxon>
        <taxon>Pseudomonadota</taxon>
        <taxon>Gammaproteobacteria</taxon>
        <taxon>Enterobacterales</taxon>
        <taxon>Enterobacteriaceae</taxon>
        <taxon>Salmonella</taxon>
    </lineage>
</organism>
<gene>
    <name evidence="1" type="primary">yfbR</name>
    <name type="ordered locus">SeAg_B2472</name>
</gene>
<dbReference type="EC" id="3.1.3.89" evidence="1"/>
<dbReference type="EMBL" id="CP001138">
    <property type="protein sequence ID" value="ACH51810.1"/>
    <property type="molecule type" value="Genomic_DNA"/>
</dbReference>
<dbReference type="RefSeq" id="WP_000813882.1">
    <property type="nucleotide sequence ID" value="NC_011149.1"/>
</dbReference>
<dbReference type="SMR" id="B5EZL4"/>
<dbReference type="KEGG" id="sea:SeAg_B2472"/>
<dbReference type="HOGENOM" id="CLU_084784_0_0_6"/>
<dbReference type="Proteomes" id="UP000008819">
    <property type="component" value="Chromosome"/>
</dbReference>
<dbReference type="GO" id="GO:0005737">
    <property type="term" value="C:cytoplasm"/>
    <property type="evidence" value="ECO:0007669"/>
    <property type="project" value="UniProtKB-SubCell"/>
</dbReference>
<dbReference type="GO" id="GO:0002953">
    <property type="term" value="F:5'-deoxynucleotidase activity"/>
    <property type="evidence" value="ECO:0007669"/>
    <property type="project" value="UniProtKB-EC"/>
</dbReference>
<dbReference type="GO" id="GO:0046872">
    <property type="term" value="F:metal ion binding"/>
    <property type="evidence" value="ECO:0007669"/>
    <property type="project" value="UniProtKB-KW"/>
</dbReference>
<dbReference type="GO" id="GO:0000166">
    <property type="term" value="F:nucleotide binding"/>
    <property type="evidence" value="ECO:0007669"/>
    <property type="project" value="UniProtKB-KW"/>
</dbReference>
<dbReference type="FunFam" id="1.10.3210.10:FF:000002">
    <property type="entry name" value="Nucleotidase YfbR"/>
    <property type="match status" value="1"/>
</dbReference>
<dbReference type="Gene3D" id="1.10.3210.10">
    <property type="entry name" value="Hypothetical protein af1432"/>
    <property type="match status" value="1"/>
</dbReference>
<dbReference type="HAMAP" id="MF_01100">
    <property type="entry name" value="5DNU"/>
    <property type="match status" value="1"/>
</dbReference>
<dbReference type="InterPro" id="IPR003607">
    <property type="entry name" value="HD/PDEase_dom"/>
</dbReference>
<dbReference type="InterPro" id="IPR006674">
    <property type="entry name" value="HD_domain"/>
</dbReference>
<dbReference type="InterPro" id="IPR022971">
    <property type="entry name" value="YfbR"/>
</dbReference>
<dbReference type="InterPro" id="IPR039356">
    <property type="entry name" value="YfbR/HDDC2"/>
</dbReference>
<dbReference type="NCBIfam" id="NF003009">
    <property type="entry name" value="PRK03826.1"/>
    <property type="match status" value="1"/>
</dbReference>
<dbReference type="PANTHER" id="PTHR11845">
    <property type="entry name" value="5'-DEOXYNUCLEOTIDASE HDDC2"/>
    <property type="match status" value="1"/>
</dbReference>
<dbReference type="PANTHER" id="PTHR11845:SF13">
    <property type="entry name" value="5'-DEOXYNUCLEOTIDASE HDDC2"/>
    <property type="match status" value="1"/>
</dbReference>
<dbReference type="Pfam" id="PF12917">
    <property type="entry name" value="YfbR-like"/>
    <property type="match status" value="1"/>
</dbReference>
<dbReference type="SMART" id="SM00471">
    <property type="entry name" value="HDc"/>
    <property type="match status" value="1"/>
</dbReference>
<dbReference type="SUPFAM" id="SSF109604">
    <property type="entry name" value="HD-domain/PDEase-like"/>
    <property type="match status" value="1"/>
</dbReference>
<dbReference type="PROSITE" id="PS51831">
    <property type="entry name" value="HD"/>
    <property type="match status" value="1"/>
</dbReference>
<sequence length="199" mass="22697">MKQSHFFAHLSRMKLINRWPLMRNVRTENVSEHSLQVAMVAHALAAIKNRKFGGQLNAERIALLAMYHDASEVLTGDLPTPVKYFNSQIAQEYKAIEKIAQQKLVDMAPDELRDIFAPLIDENAWSEEEQAIVKQADALCAYLKCLEELSAGNNEFGLAKTRLEKTLELRRSQEMDYFMAVFVPSFHLSLDEISQDSPL</sequence>
<comment type="function">
    <text evidence="1">Catalyzes the strictly specific dephosphorylation of 2'-deoxyribonucleoside 5'-monophosphates.</text>
</comment>
<comment type="catalytic activity">
    <reaction evidence="1">
        <text>a 2'-deoxyribonucleoside 5'-phosphate + H2O = a 2'-deoxyribonucleoside + phosphate</text>
        <dbReference type="Rhea" id="RHEA:36167"/>
        <dbReference type="ChEBI" id="CHEBI:15377"/>
        <dbReference type="ChEBI" id="CHEBI:18274"/>
        <dbReference type="ChEBI" id="CHEBI:43474"/>
        <dbReference type="ChEBI" id="CHEBI:65317"/>
        <dbReference type="EC" id="3.1.3.89"/>
    </reaction>
</comment>
<comment type="cofactor">
    <cofactor evidence="1">
        <name>a divalent metal cation</name>
        <dbReference type="ChEBI" id="CHEBI:60240"/>
    </cofactor>
</comment>
<comment type="subunit">
    <text evidence="1">Homodimer.</text>
</comment>
<comment type="subcellular location">
    <subcellularLocation>
        <location evidence="1">Cytoplasm</location>
    </subcellularLocation>
</comment>
<comment type="similarity">
    <text evidence="1">Belongs to the 5DNU family.</text>
</comment>
<feature type="chain" id="PRO_1000136971" description="5'-deoxynucleotidase YfbR">
    <location>
        <begin position="1"/>
        <end position="199"/>
    </location>
</feature>
<feature type="domain" description="HD" evidence="2">
    <location>
        <begin position="30"/>
        <end position="142"/>
    </location>
</feature>
<feature type="binding site" evidence="1">
    <location>
        <begin position="18"/>
        <end position="19"/>
    </location>
    <ligand>
        <name>substrate</name>
    </ligand>
</feature>
<feature type="binding site" evidence="1">
    <location>
        <position position="33"/>
    </location>
    <ligand>
        <name>a divalent metal cation</name>
        <dbReference type="ChEBI" id="CHEBI:60240"/>
    </ligand>
</feature>
<feature type="binding site" evidence="1">
    <location>
        <position position="33"/>
    </location>
    <ligand>
        <name>substrate</name>
    </ligand>
</feature>
<feature type="binding site" evidence="1">
    <location>
        <position position="68"/>
    </location>
    <ligand>
        <name>a divalent metal cation</name>
        <dbReference type="ChEBI" id="CHEBI:60240"/>
    </ligand>
</feature>
<feature type="binding site" evidence="1">
    <location>
        <position position="69"/>
    </location>
    <ligand>
        <name>a divalent metal cation</name>
        <dbReference type="ChEBI" id="CHEBI:60240"/>
    </ligand>
</feature>
<feature type="binding site" evidence="1">
    <location>
        <position position="69"/>
    </location>
    <ligand>
        <name>substrate</name>
    </ligand>
</feature>
<feature type="binding site" evidence="1">
    <location>
        <begin position="77"/>
        <end position="80"/>
    </location>
    <ligand>
        <name>substrate</name>
    </ligand>
</feature>
<feature type="binding site" evidence="1">
    <location>
        <position position="137"/>
    </location>
    <ligand>
        <name>a divalent metal cation</name>
        <dbReference type="ChEBI" id="CHEBI:60240"/>
    </ligand>
</feature>
<feature type="binding site" evidence="1">
    <location>
        <position position="137"/>
    </location>
    <ligand>
        <name>substrate</name>
    </ligand>
</feature>
<feature type="site" description="Appears to be important in orienting the phosphate for catalysis" evidence="1">
    <location>
        <position position="18"/>
    </location>
</feature>
<keyword id="KW-0963">Cytoplasm</keyword>
<keyword id="KW-0378">Hydrolase</keyword>
<keyword id="KW-0479">Metal-binding</keyword>
<keyword id="KW-0547">Nucleotide-binding</keyword>
<reference key="1">
    <citation type="journal article" date="2011" name="J. Bacteriol.">
        <title>Comparative genomics of 28 Salmonella enterica isolates: evidence for CRISPR-mediated adaptive sublineage evolution.</title>
        <authorList>
            <person name="Fricke W.F."/>
            <person name="Mammel M.K."/>
            <person name="McDermott P.F."/>
            <person name="Tartera C."/>
            <person name="White D.G."/>
            <person name="Leclerc J.E."/>
            <person name="Ravel J."/>
            <person name="Cebula T.A."/>
        </authorList>
    </citation>
    <scope>NUCLEOTIDE SEQUENCE [LARGE SCALE GENOMIC DNA]</scope>
    <source>
        <strain>SL483</strain>
    </source>
</reference>